<gene>
    <name type="primary">GF14A</name>
    <name type="ordered locus">Os08g0480800</name>
    <name type="ordered locus">LOC_Os08g37490</name>
    <name type="ORF">OJ1113_A10.40</name>
    <name type="ORF">OSJNBb0092C08.10</name>
</gene>
<comment type="function">
    <text evidence="1">Is associated with a DNA binding complex that binds to the G box, a well-characterized cis-acting DNA regulatory element found in plant genes.</text>
</comment>
<comment type="similarity">
    <text evidence="3">Belongs to the 14-3-3 family.</text>
</comment>
<feature type="chain" id="PRO_0000246063" description="14-3-3-like protein GF14-A">
    <location>
        <begin position="1"/>
        <end position="264"/>
    </location>
</feature>
<feature type="region of interest" description="Disordered" evidence="2">
    <location>
        <begin position="245"/>
        <end position="264"/>
    </location>
</feature>
<feature type="compositionally biased region" description="Basic and acidic residues" evidence="2">
    <location>
        <begin position="252"/>
        <end position="264"/>
    </location>
</feature>
<proteinExistence type="evidence at transcript level"/>
<name>14331_ORYSJ</name>
<keyword id="KW-1185">Reference proteome</keyword>
<dbReference type="EMBL" id="AY224524">
    <property type="protein sequence ID" value="AAO72644.1"/>
    <property type="molecule type" value="mRNA"/>
</dbReference>
<dbReference type="EMBL" id="AY224434">
    <property type="protein sequence ID" value="AAO72553.1"/>
    <property type="molecule type" value="mRNA"/>
</dbReference>
<dbReference type="EMBL" id="AP004643">
    <property type="protein sequence ID" value="BAD09765.1"/>
    <property type="molecule type" value="Genomic_DNA"/>
</dbReference>
<dbReference type="EMBL" id="AP005391">
    <property type="protein sequence ID" value="BAD10275.1"/>
    <property type="molecule type" value="Genomic_DNA"/>
</dbReference>
<dbReference type="EMBL" id="AP008214">
    <property type="protein sequence ID" value="BAF23974.1"/>
    <property type="molecule type" value="Genomic_DNA"/>
</dbReference>
<dbReference type="EMBL" id="AP014964">
    <property type="protein sequence ID" value="BAT05919.1"/>
    <property type="molecule type" value="Genomic_DNA"/>
</dbReference>
<dbReference type="RefSeq" id="XP_015649807.1">
    <property type="nucleotide sequence ID" value="XM_015794321.1"/>
</dbReference>
<dbReference type="SMR" id="Q84J55"/>
<dbReference type="DIP" id="DIP-46485N"/>
<dbReference type="FunCoup" id="Q84J55">
    <property type="interactions" value="2006"/>
</dbReference>
<dbReference type="IntAct" id="Q84J55">
    <property type="interactions" value="5"/>
</dbReference>
<dbReference type="STRING" id="39947.Q84J55"/>
<dbReference type="PaxDb" id="39947-Q84J55"/>
<dbReference type="EnsemblPlants" id="Os08t0480800-01">
    <property type="protein sequence ID" value="Os08t0480800-01"/>
    <property type="gene ID" value="Os08g0480800"/>
</dbReference>
<dbReference type="Gramene" id="Os08t0480800-01">
    <property type="protein sequence ID" value="Os08t0480800-01"/>
    <property type="gene ID" value="Os08g0480800"/>
</dbReference>
<dbReference type="KEGG" id="dosa:Os08g0480800"/>
<dbReference type="eggNOG" id="KOG0841">
    <property type="taxonomic scope" value="Eukaryota"/>
</dbReference>
<dbReference type="HOGENOM" id="CLU_058290_0_0_1"/>
<dbReference type="InParanoid" id="Q84J55"/>
<dbReference type="OMA" id="CNDVLXT"/>
<dbReference type="OrthoDB" id="10260625at2759"/>
<dbReference type="PlantReactome" id="R-OSA-5632095">
    <property type="pathway name" value="Brassinosteroid signaling"/>
</dbReference>
<dbReference type="Proteomes" id="UP000000763">
    <property type="component" value="Chromosome 8"/>
</dbReference>
<dbReference type="Proteomes" id="UP000059680">
    <property type="component" value="Chromosome 8"/>
</dbReference>
<dbReference type="GO" id="GO:0005737">
    <property type="term" value="C:cytoplasm"/>
    <property type="evidence" value="ECO:0000318"/>
    <property type="project" value="GO_Central"/>
</dbReference>
<dbReference type="GO" id="GO:0008104">
    <property type="term" value="P:protein localization"/>
    <property type="evidence" value="ECO:0000318"/>
    <property type="project" value="GO_Central"/>
</dbReference>
<dbReference type="GO" id="GO:0007165">
    <property type="term" value="P:signal transduction"/>
    <property type="evidence" value="ECO:0000318"/>
    <property type="project" value="GO_Central"/>
</dbReference>
<dbReference type="FunFam" id="1.20.190.20:FF:000002">
    <property type="entry name" value="14-3-3 protein epsilon"/>
    <property type="match status" value="1"/>
</dbReference>
<dbReference type="Gene3D" id="1.20.190.20">
    <property type="entry name" value="14-3-3 domain"/>
    <property type="match status" value="1"/>
</dbReference>
<dbReference type="InterPro" id="IPR000308">
    <property type="entry name" value="14-3-3"/>
</dbReference>
<dbReference type="InterPro" id="IPR023409">
    <property type="entry name" value="14-3-3_CS"/>
</dbReference>
<dbReference type="InterPro" id="IPR036815">
    <property type="entry name" value="14-3-3_dom_sf"/>
</dbReference>
<dbReference type="InterPro" id="IPR023410">
    <property type="entry name" value="14-3-3_domain"/>
</dbReference>
<dbReference type="PANTHER" id="PTHR18860">
    <property type="entry name" value="14-3-3 PROTEIN"/>
    <property type="match status" value="1"/>
</dbReference>
<dbReference type="Pfam" id="PF00244">
    <property type="entry name" value="14-3-3"/>
    <property type="match status" value="1"/>
</dbReference>
<dbReference type="PIRSF" id="PIRSF000868">
    <property type="entry name" value="14-3-3"/>
    <property type="match status" value="1"/>
</dbReference>
<dbReference type="PRINTS" id="PR00305">
    <property type="entry name" value="1433ZETA"/>
</dbReference>
<dbReference type="SMART" id="SM00101">
    <property type="entry name" value="14_3_3"/>
    <property type="match status" value="1"/>
</dbReference>
<dbReference type="SUPFAM" id="SSF48445">
    <property type="entry name" value="14-3-3 protein"/>
    <property type="match status" value="1"/>
</dbReference>
<dbReference type="PROSITE" id="PS00796">
    <property type="entry name" value="1433_1"/>
    <property type="match status" value="1"/>
</dbReference>
<dbReference type="PROSITE" id="PS00797">
    <property type="entry name" value="1433_2"/>
    <property type="match status" value="1"/>
</dbReference>
<organism>
    <name type="scientific">Oryza sativa subsp. japonica</name>
    <name type="common">Rice</name>
    <dbReference type="NCBI Taxonomy" id="39947"/>
    <lineage>
        <taxon>Eukaryota</taxon>
        <taxon>Viridiplantae</taxon>
        <taxon>Streptophyta</taxon>
        <taxon>Embryophyta</taxon>
        <taxon>Tracheophyta</taxon>
        <taxon>Spermatophyta</taxon>
        <taxon>Magnoliopsida</taxon>
        <taxon>Liliopsida</taxon>
        <taxon>Poales</taxon>
        <taxon>Poaceae</taxon>
        <taxon>BOP clade</taxon>
        <taxon>Oryzoideae</taxon>
        <taxon>Oryzeae</taxon>
        <taxon>Oryzinae</taxon>
        <taxon>Oryza</taxon>
        <taxon>Oryza sativa</taxon>
    </lineage>
</organism>
<protein>
    <recommendedName>
        <fullName>14-3-3-like protein GF14-A</fullName>
    </recommendedName>
    <alternativeName>
        <fullName>G-box factor 14-3-3 homolog A</fullName>
    </alternativeName>
</protein>
<reference key="1">
    <citation type="journal article" date="2003" name="Plant Mol. Biol.">
        <title>Identification of rice (Oryza sativa) proteins linked to the cyclin-mediated regulation of the cell cycle.</title>
        <authorList>
            <person name="Cooper B."/>
            <person name="Hutchison D."/>
            <person name="Park S."/>
            <person name="Guimil S."/>
            <person name="Luginbuehl P."/>
            <person name="Ellero C."/>
            <person name="Goff S.A."/>
            <person name="Glazebrook J."/>
        </authorList>
    </citation>
    <scope>NUCLEOTIDE SEQUENCE [MRNA]</scope>
</reference>
<reference key="2">
    <citation type="journal article" date="2003" name="Proc. Natl. Acad. Sci. U.S.A.">
        <title>A network of rice genes associated with stress response and seed development.</title>
        <authorList>
            <person name="Cooper B."/>
            <person name="Clarke J.D."/>
            <person name="Budworth P."/>
            <person name="Kreps J."/>
            <person name="Hutchison D."/>
            <person name="Park S."/>
            <person name="Guimil S."/>
            <person name="Dunn M."/>
            <person name="Luginbuehl P."/>
            <person name="Ellero C."/>
            <person name="Goff S.A."/>
            <person name="Glazebrook J."/>
        </authorList>
    </citation>
    <scope>NUCLEOTIDE SEQUENCE [MRNA]</scope>
</reference>
<reference key="3">
    <citation type="journal article" date="2005" name="Nature">
        <title>The map-based sequence of the rice genome.</title>
        <authorList>
            <consortium name="International rice genome sequencing project (IRGSP)"/>
        </authorList>
    </citation>
    <scope>NUCLEOTIDE SEQUENCE [LARGE SCALE GENOMIC DNA]</scope>
    <source>
        <strain>cv. Nipponbare</strain>
    </source>
</reference>
<reference key="4">
    <citation type="journal article" date="2008" name="Nucleic Acids Res.">
        <title>The rice annotation project database (RAP-DB): 2008 update.</title>
        <authorList>
            <consortium name="The rice annotation project (RAP)"/>
        </authorList>
    </citation>
    <scope>GENOME REANNOTATION</scope>
    <source>
        <strain>cv. Nipponbare</strain>
    </source>
</reference>
<reference key="5">
    <citation type="journal article" date="2013" name="Rice">
        <title>Improvement of the Oryza sativa Nipponbare reference genome using next generation sequence and optical map data.</title>
        <authorList>
            <person name="Kawahara Y."/>
            <person name="de la Bastide M."/>
            <person name="Hamilton J.P."/>
            <person name="Kanamori H."/>
            <person name="McCombie W.R."/>
            <person name="Ouyang S."/>
            <person name="Schwartz D.C."/>
            <person name="Tanaka T."/>
            <person name="Wu J."/>
            <person name="Zhou S."/>
            <person name="Childs K.L."/>
            <person name="Davidson R.M."/>
            <person name="Lin H."/>
            <person name="Quesada-Ocampo L."/>
            <person name="Vaillancourt B."/>
            <person name="Sakai H."/>
            <person name="Lee S.S."/>
            <person name="Kim J."/>
            <person name="Numa H."/>
            <person name="Itoh T."/>
            <person name="Buell C.R."/>
            <person name="Matsumoto T."/>
        </authorList>
    </citation>
    <scope>GENOME REANNOTATION</scope>
    <source>
        <strain>cv. Nipponbare</strain>
    </source>
</reference>
<reference key="6">
    <citation type="journal article" date="2006" name="DNA Res.">
        <title>The rice 14-3-3 gene family and its involvement in responses to biotic and abiotic stress.</title>
        <authorList>
            <person name="Chen F."/>
            <person name="Li Q."/>
            <person name="Sun L."/>
            <person name="He Z."/>
        </authorList>
    </citation>
    <scope>NOMENCLATURE</scope>
</reference>
<sequence>MAAAAGGGTREEMVYMAKLAEQAERYEEMVEFMEKVVTAAAAGGGGELTVEERNLLSVAYKNVIGARRASWRIVSSIEQKEEGRGAAGHAAAARSYRARVEAELSNICAGILRLLDERLVPAAAAVDAKVFYLKMKGDYHRYLAEFKTGAERKDAADATLAAYQAAQDIAMKELSPTHPIRLGLALNFSVFYYEILNSPDRACTLAKQAFDEAISELDTLGEESYKDSTLIMQLLRDNLTLWTSDMQDDGGDEMRDATKPEDEH</sequence>
<accession>Q84J55</accession>
<accession>Q0J4Z1</accession>
<evidence type="ECO:0000250" key="1"/>
<evidence type="ECO:0000256" key="2">
    <source>
        <dbReference type="SAM" id="MobiDB-lite"/>
    </source>
</evidence>
<evidence type="ECO:0000305" key="3"/>